<protein>
    <recommendedName>
        <fullName>Uncharacterized protein Mb1552</fullName>
    </recommendedName>
</protein>
<dbReference type="EMBL" id="LT708304">
    <property type="protein sequence ID" value="SIU00155.1"/>
    <property type="molecule type" value="Genomic_DNA"/>
</dbReference>
<dbReference type="RefSeq" id="NP_855204.1">
    <property type="nucleotide sequence ID" value="NC_002945.3"/>
</dbReference>
<dbReference type="RefSeq" id="WP_003407672.1">
    <property type="nucleotide sequence ID" value="NC_002945.4"/>
</dbReference>
<dbReference type="SMR" id="P64868"/>
<dbReference type="KEGG" id="mbo:BQ2027_MB1552"/>
<dbReference type="PATRIC" id="fig|233413.5.peg.1697"/>
<dbReference type="Proteomes" id="UP000001419">
    <property type="component" value="Chromosome"/>
</dbReference>
<dbReference type="CDD" id="cd04186">
    <property type="entry name" value="GT_2_like_c"/>
    <property type="match status" value="1"/>
</dbReference>
<dbReference type="Gene3D" id="3.90.550.10">
    <property type="entry name" value="Spore Coat Polysaccharide Biosynthesis Protein SpsA, Chain A"/>
    <property type="match status" value="1"/>
</dbReference>
<dbReference type="InterPro" id="IPR029044">
    <property type="entry name" value="Nucleotide-diphossugar_trans"/>
</dbReference>
<dbReference type="PANTHER" id="PTHR43179:SF11">
    <property type="entry name" value="GLYCOSYL TRANSFERASE"/>
    <property type="match status" value="1"/>
</dbReference>
<dbReference type="PANTHER" id="PTHR43179">
    <property type="entry name" value="RHAMNOSYLTRANSFERASE WBBL"/>
    <property type="match status" value="1"/>
</dbReference>
<dbReference type="SUPFAM" id="SSF53448">
    <property type="entry name" value="Nucleotide-diphospho-sugar transferases"/>
    <property type="match status" value="1"/>
</dbReference>
<keyword id="KW-1185">Reference proteome</keyword>
<organism>
    <name type="scientific">Mycobacterium bovis (strain ATCC BAA-935 / AF2122/97)</name>
    <dbReference type="NCBI Taxonomy" id="233413"/>
    <lineage>
        <taxon>Bacteria</taxon>
        <taxon>Bacillati</taxon>
        <taxon>Actinomycetota</taxon>
        <taxon>Actinomycetes</taxon>
        <taxon>Mycobacteriales</taxon>
        <taxon>Mycobacteriaceae</taxon>
        <taxon>Mycobacterium</taxon>
        <taxon>Mycobacterium tuberculosis complex</taxon>
    </lineage>
</organism>
<gene>
    <name type="primary">wbbL2</name>
    <name type="ordered locus">BQ2027_MB1552</name>
</gene>
<feature type="chain" id="PRO_0000103871" description="Uncharacterized protein Mb1552">
    <location>
        <begin position="1"/>
        <end position="261"/>
    </location>
</feature>
<reference key="1">
    <citation type="journal article" date="2003" name="Proc. Natl. Acad. Sci. U.S.A.">
        <title>The complete genome sequence of Mycobacterium bovis.</title>
        <authorList>
            <person name="Garnier T."/>
            <person name="Eiglmeier K."/>
            <person name="Camus J.-C."/>
            <person name="Medina N."/>
            <person name="Mansoor H."/>
            <person name="Pryor M."/>
            <person name="Duthoy S."/>
            <person name="Grondin S."/>
            <person name="Lacroix C."/>
            <person name="Monsempe C."/>
            <person name="Simon S."/>
            <person name="Harris B."/>
            <person name="Atkin R."/>
            <person name="Doggett J."/>
            <person name="Mayes R."/>
            <person name="Keating L."/>
            <person name="Wheeler P.R."/>
            <person name="Parkhill J."/>
            <person name="Barrell B.G."/>
            <person name="Cole S.T."/>
            <person name="Gordon S.V."/>
            <person name="Hewinson R.G."/>
        </authorList>
    </citation>
    <scope>NUCLEOTIDE SEQUENCE [LARGE SCALE GENOMIC DNA]</scope>
    <source>
        <strain>ATCC BAA-935 / AF2122/97</strain>
    </source>
</reference>
<reference key="2">
    <citation type="journal article" date="2017" name="Genome Announc.">
        <title>Updated reference genome sequence and annotation of Mycobacterium bovis AF2122/97.</title>
        <authorList>
            <person name="Malone K.M."/>
            <person name="Farrell D."/>
            <person name="Stuber T.P."/>
            <person name="Schubert O.T."/>
            <person name="Aebersold R."/>
            <person name="Robbe-Austerman S."/>
            <person name="Gordon S.V."/>
        </authorList>
    </citation>
    <scope>NUCLEOTIDE SEQUENCE [LARGE SCALE GENOMIC DNA]</scope>
    <scope>GENOME REANNOTATION</scope>
    <source>
        <strain>ATCC BAA-935 / AF2122/97</strain>
    </source>
</reference>
<sequence>MYAPLVSLMITVPVFGQHEYTHALVADLEREGADYLIVDNRGDYPRIGTERVSTPGENLGWAGGSELGFRLAFAEGYSHAMTLNNDTRVSKGFVAALLDSRLPADAGMVGPMFDVGFPFAVADEKPDAESYVPRARYRKVPAVEGTALVMSRDCWDAVGGMDLSTFGRYGWGLDLDLALRARKSGYGLYTTEMAYINHFGRKTANTHFGGHRYHWGASAAMIRGLRRTHGWPAAMGILREMGMAHHRKWHKSFPLTCPASC</sequence>
<name>Y1552_MYCBO</name>
<proteinExistence type="predicted"/>
<accession>P64868</accession>
<accession>A0A1R3XYK3</accession>
<accession>Q50582</accession>
<accession>X2BIL7</accession>